<evidence type="ECO:0000250" key="1"/>
<evidence type="ECO:0000255" key="2"/>
<evidence type="ECO:0000256" key="3">
    <source>
        <dbReference type="SAM" id="MobiDB-lite"/>
    </source>
</evidence>
<evidence type="ECO:0000305" key="4"/>
<organism>
    <name type="scientific">Dictyostelium discoideum</name>
    <name type="common">Social amoeba</name>
    <dbReference type="NCBI Taxonomy" id="44689"/>
    <lineage>
        <taxon>Eukaryota</taxon>
        <taxon>Amoebozoa</taxon>
        <taxon>Evosea</taxon>
        <taxon>Eumycetozoa</taxon>
        <taxon>Dictyostelia</taxon>
        <taxon>Dictyosteliales</taxon>
        <taxon>Dictyosteliaceae</taxon>
        <taxon>Dictyostelium</taxon>
    </lineage>
</organism>
<reference key="1">
    <citation type="journal article" date="2002" name="Nature">
        <title>Sequence and analysis of chromosome 2 of Dictyostelium discoideum.</title>
        <authorList>
            <person name="Gloeckner G."/>
            <person name="Eichinger L."/>
            <person name="Szafranski K."/>
            <person name="Pachebat J.A."/>
            <person name="Bankier A.T."/>
            <person name="Dear P.H."/>
            <person name="Lehmann R."/>
            <person name="Baumgart C."/>
            <person name="Parra G."/>
            <person name="Abril J.F."/>
            <person name="Guigo R."/>
            <person name="Kumpf K."/>
            <person name="Tunggal B."/>
            <person name="Cox E.C."/>
            <person name="Quail M.A."/>
            <person name="Platzer M."/>
            <person name="Rosenthal A."/>
            <person name="Noegel A.A."/>
        </authorList>
    </citation>
    <scope>NUCLEOTIDE SEQUENCE [LARGE SCALE GENOMIC DNA]</scope>
    <source>
        <strain>AX4</strain>
    </source>
</reference>
<reference key="2">
    <citation type="journal article" date="2005" name="Nature">
        <title>The genome of the social amoeba Dictyostelium discoideum.</title>
        <authorList>
            <person name="Eichinger L."/>
            <person name="Pachebat J.A."/>
            <person name="Gloeckner G."/>
            <person name="Rajandream M.A."/>
            <person name="Sucgang R."/>
            <person name="Berriman M."/>
            <person name="Song J."/>
            <person name="Olsen R."/>
            <person name="Szafranski K."/>
            <person name="Xu Q."/>
            <person name="Tunggal B."/>
            <person name="Kummerfeld S."/>
            <person name="Madera M."/>
            <person name="Konfortov B.A."/>
            <person name="Rivero F."/>
            <person name="Bankier A.T."/>
            <person name="Lehmann R."/>
            <person name="Hamlin N."/>
            <person name="Davies R."/>
            <person name="Gaudet P."/>
            <person name="Fey P."/>
            <person name="Pilcher K."/>
            <person name="Chen G."/>
            <person name="Saunders D."/>
            <person name="Sodergren E.J."/>
            <person name="Davis P."/>
            <person name="Kerhornou A."/>
            <person name="Nie X."/>
            <person name="Hall N."/>
            <person name="Anjard C."/>
            <person name="Hemphill L."/>
            <person name="Bason N."/>
            <person name="Farbrother P."/>
            <person name="Desany B."/>
            <person name="Just E."/>
            <person name="Morio T."/>
            <person name="Rost R."/>
            <person name="Churcher C.M."/>
            <person name="Cooper J."/>
            <person name="Haydock S."/>
            <person name="van Driessche N."/>
            <person name="Cronin A."/>
            <person name="Goodhead I."/>
            <person name="Muzny D.M."/>
            <person name="Mourier T."/>
            <person name="Pain A."/>
            <person name="Lu M."/>
            <person name="Harper D."/>
            <person name="Lindsay R."/>
            <person name="Hauser H."/>
            <person name="James K.D."/>
            <person name="Quiles M."/>
            <person name="Madan Babu M."/>
            <person name="Saito T."/>
            <person name="Buchrieser C."/>
            <person name="Wardroper A."/>
            <person name="Felder M."/>
            <person name="Thangavelu M."/>
            <person name="Johnson D."/>
            <person name="Knights A."/>
            <person name="Loulseged H."/>
            <person name="Mungall K.L."/>
            <person name="Oliver K."/>
            <person name="Price C."/>
            <person name="Quail M.A."/>
            <person name="Urushihara H."/>
            <person name="Hernandez J."/>
            <person name="Rabbinowitsch E."/>
            <person name="Steffen D."/>
            <person name="Sanders M."/>
            <person name="Ma J."/>
            <person name="Kohara Y."/>
            <person name="Sharp S."/>
            <person name="Simmonds M.N."/>
            <person name="Spiegler S."/>
            <person name="Tivey A."/>
            <person name="Sugano S."/>
            <person name="White B."/>
            <person name="Walker D."/>
            <person name="Woodward J.R."/>
            <person name="Winckler T."/>
            <person name="Tanaka Y."/>
            <person name="Shaulsky G."/>
            <person name="Schleicher M."/>
            <person name="Weinstock G.M."/>
            <person name="Rosenthal A."/>
            <person name="Cox E.C."/>
            <person name="Chisholm R.L."/>
            <person name="Gibbs R.A."/>
            <person name="Loomis W.F."/>
            <person name="Platzer M."/>
            <person name="Kay R.R."/>
            <person name="Williams J.G."/>
            <person name="Dear P.H."/>
            <person name="Noegel A.A."/>
            <person name="Barrell B.G."/>
            <person name="Kuspa A."/>
        </authorList>
    </citation>
    <scope>NUCLEOTIDE SEQUENCE [LARGE SCALE GENOMIC DNA]</scope>
    <source>
        <strain>AX4</strain>
    </source>
</reference>
<protein>
    <recommendedName>
        <fullName>Structural maintenance of chromosomes protein 3</fullName>
        <shortName>SMC protein 3</shortName>
        <shortName>SMC-3</shortName>
    </recommendedName>
</protein>
<sequence length="1437" mass="164847">MFIKFIFIKGFRSYKDQGFTSITLHPGFNVVTGRNGAGKSNLFAAIRFLLGDLNVGNNSEDRLKLLHSYGGNTMQTGYVEIVFDNSDHRFPIDKTEFSLRRTFGTSKDEFSIGNNKLSKADVRNMFEAAGFSSSNPYYIVQQGKINTLALMKDSDRLDMLKEVAGATVYEERKRESVAIMIESESKSIKIEEFLKYIDERIKVLDKERKELQLYQTQIEMKKQFEAYIIHLEANESNDRILDLEKEKEKYLIHSSKESKKLERFTDELKKDESKFNKLLSEIKKIDNEKIMVEKLNEVFDKQKAQLVIQQKHFKKLLSKEQAKLEKLQKEQDLLSGSKEKLEKEIEIIKPKLEELIGQEDDIDNKLSSTERNLQELYVKQGMFQFKSKTERDKYLGDESSKLEDIVNQYEQQAQSLEEDVEDMKQIQQSKGKQFDNSMASKDKEAEIVKTAELRVHELKLEKDQIEQRVSSTFQSINEMKSNLTEHRNEWKKAERNLQTIMNRPLSEGLTRLNQIRQEGKIKGIHGPLVELFDIVEPEATLALEVVGGNGLFHVVVDTDDTASKILEILNTENIGRLSFIPLNRVRTKPPKFPILENDLVCPLIKVISFDPIYTEAMKLVFGKTLICKDEATAEQVRKSSHVDCITFEGDVFHSKGAVTGGYYSKKKLKLSSYQQIKHWRQQYQQLQTQLTEKESELEKLQASLLSIQKTIRTKEDEKNKILSNNDNSRVELDKIISERTMYIEILEKKQTILKKLKIDIQNCKDTIDGYQKQINTAFNTKLTEEESNLLLTLSESSIQLKEQKISISSDVMKLQSRKNQMTNQLNQNYGKRLMEIEGEIKSLNPENSKLQIELKQKEIDEINIEIDGVREKLESLVQSLNEKDAEIKPIKVSIDALKQQTSTIADQLVADGKKMESLLAQIQSFNKVRDAKQLRVLSKGDRFNFEELKKYNKDQSVEELNKINKSLASLRHVNQKANDQFNSFTNQYNSLEARRDELYESNASIQLLIKTLDNKKDEAIARTFSGVAKNFTQVFKELIPGGSAKLVMKRQMDEDEGEGEDPKEWADGETPKGLLTFTGIGIQVSFGEGHEPCSMRQLSGGQKTLVALALIFALQRTDPAPFYLLDEIDAALDHNYRVAVSKMIRKHSREIQFIATTFGPEFVMDANQNWIVVFNKGGSKLVPGSTEDALNVIKQLDNGSAFDYSYQGITEEEFNQDRPVLGVAENKHLVAFEFKRAKKRALKALAKAEEACAIMVQDEANQDSNADSSEKLKHDKKIFEKLHKEYLLRAAEFNQVKERFIRFGGIIKQQGDDELSQSSQPQDKEMENIEKEKDNNQQTSDTEMKDTDQSTTKQKSPPKRKSPSQDTSDIETSDDESKKKQTESNQEESDIDEETPSQRFEEALNYASQKLKQHGLQESEQSEQEEDDDDISSDSSD</sequence>
<feature type="chain" id="PRO_0000365594" description="Structural maintenance of chromosomes protein 3">
    <location>
        <begin position="1"/>
        <end position="1437"/>
    </location>
</feature>
<feature type="domain" description="SMC hinge">
    <location>
        <begin position="522"/>
        <end position="636"/>
    </location>
</feature>
<feature type="region of interest" description="Disordered" evidence="3">
    <location>
        <begin position="1050"/>
        <end position="1070"/>
    </location>
</feature>
<feature type="region of interest" description="Disordered" evidence="3">
    <location>
        <begin position="1330"/>
        <end position="1437"/>
    </location>
</feature>
<feature type="coiled-coil region" evidence="2">
    <location>
        <begin position="202"/>
        <end position="503"/>
    </location>
</feature>
<feature type="coiled-coil region" evidence="2">
    <location>
        <begin position="672"/>
        <end position="777"/>
    </location>
</feature>
<feature type="coiled-coil region" evidence="2">
    <location>
        <begin position="806"/>
        <end position="888"/>
    </location>
</feature>
<feature type="coiled-coil region" evidence="2">
    <location>
        <begin position="952"/>
        <end position="1007"/>
    </location>
</feature>
<feature type="compositionally biased region" description="Basic and acidic residues" evidence="3">
    <location>
        <begin position="1060"/>
        <end position="1070"/>
    </location>
</feature>
<feature type="compositionally biased region" description="Acidic residues" evidence="3">
    <location>
        <begin position="1385"/>
        <end position="1395"/>
    </location>
</feature>
<feature type="compositionally biased region" description="Acidic residues" evidence="3">
    <location>
        <begin position="1420"/>
        <end position="1437"/>
    </location>
</feature>
<feature type="binding site" evidence="2">
    <location>
        <begin position="33"/>
        <end position="40"/>
    </location>
    <ligand>
        <name>ATP</name>
        <dbReference type="ChEBI" id="CHEBI:30616"/>
    </ligand>
</feature>
<feature type="modified residue" description="N6-acetyllysine" evidence="1">
    <location>
        <position position="107"/>
    </location>
</feature>
<keyword id="KW-0007">Acetylation</keyword>
<keyword id="KW-0067">ATP-binding</keyword>
<keyword id="KW-0131">Cell cycle</keyword>
<keyword id="KW-0132">Cell division</keyword>
<keyword id="KW-0175">Coiled coil</keyword>
<keyword id="KW-0498">Mitosis</keyword>
<keyword id="KW-0547">Nucleotide-binding</keyword>
<keyword id="KW-0539">Nucleus</keyword>
<keyword id="KW-1185">Reference proteome</keyword>
<comment type="function">
    <text evidence="1">Central component of cohesin, a complex which is required for the cohesion of sister chromatids after DNA replication. The cohesin complex may form a large proteinaceous ring within which sister chromatids can be trapped. Involved in chromosome cohesion during the cell cycle and in DNA repair it also regulates DNA replication. At anaphase, the complex is cleaved and dissociates from chromatin, allowing sister chromatids to segregate. The cohesin complex may also play a role in spindle pole assembly during mitosis and in chromosomes movement (By similarity).</text>
</comment>
<comment type="subunit">
    <text evidence="1">Component of the cohesin complex.</text>
</comment>
<comment type="subcellular location">
    <subcellularLocation>
        <location evidence="4">Nucleus</location>
    </subcellularLocation>
</comment>
<comment type="domain">
    <text evidence="1">The flexible SMC hinge domain, which separates the large intramolecular coiled coil regions, allows the heterotypic interaction with the corresponding domain of SMC3, forming a V-shaped heterodimer. The two heads of the heterodimer are then connected by different ends of the cleavable RAD21 protein, forming a ring structure (By similarity).</text>
</comment>
<comment type="PTM">
    <text evidence="1">Acetylation at Lys-107 by ESCO1 is important for genome stability and S phase sister chromatid cohesion.</text>
</comment>
<comment type="similarity">
    <text evidence="4">Belongs to the SMC family. SMC3 subfamily.</text>
</comment>
<dbReference type="EMBL" id="AAFI02000014">
    <property type="protein sequence ID" value="EAL69350.1"/>
    <property type="molecule type" value="Genomic_DNA"/>
</dbReference>
<dbReference type="RefSeq" id="XP_643274.1">
    <property type="nucleotide sequence ID" value="XM_638182.1"/>
</dbReference>
<dbReference type="SMR" id="Q552D9"/>
<dbReference type="FunCoup" id="Q552D9">
    <property type="interactions" value="1074"/>
</dbReference>
<dbReference type="STRING" id="44689.Q552D9"/>
<dbReference type="PaxDb" id="44689-DDB0219934"/>
<dbReference type="EnsemblProtists" id="EAL69350">
    <property type="protein sequence ID" value="EAL69350"/>
    <property type="gene ID" value="DDB_G0276101"/>
</dbReference>
<dbReference type="GeneID" id="8620317"/>
<dbReference type="KEGG" id="ddi:DDB_G0276101"/>
<dbReference type="dictyBase" id="DDB_G0276101">
    <property type="gene designation" value="smc3"/>
</dbReference>
<dbReference type="VEuPathDB" id="AmoebaDB:DDB_G0276101"/>
<dbReference type="eggNOG" id="KOG0964">
    <property type="taxonomic scope" value="Eukaryota"/>
</dbReference>
<dbReference type="HOGENOM" id="CLU_001042_5_0_1"/>
<dbReference type="InParanoid" id="Q552D9"/>
<dbReference type="OMA" id="GQKTVCA"/>
<dbReference type="PhylomeDB" id="Q552D9"/>
<dbReference type="Reactome" id="R-DDI-2468052">
    <property type="pathway name" value="Establishment of Sister Chromatid Cohesion"/>
</dbReference>
<dbReference type="Reactome" id="R-DDI-2470946">
    <property type="pathway name" value="Cohesin Loading onto Chromatin"/>
</dbReference>
<dbReference type="Reactome" id="R-DDI-2500257">
    <property type="pathway name" value="Resolution of Sister Chromatid Cohesion"/>
</dbReference>
<dbReference type="Reactome" id="R-DDI-3108214">
    <property type="pathway name" value="SUMOylation of DNA damage response and repair proteins"/>
</dbReference>
<dbReference type="PRO" id="PR:Q552D9"/>
<dbReference type="Proteomes" id="UP000002195">
    <property type="component" value="Chromosome 2"/>
</dbReference>
<dbReference type="GO" id="GO:0000785">
    <property type="term" value="C:chromatin"/>
    <property type="evidence" value="ECO:0000250"/>
    <property type="project" value="UniProtKB"/>
</dbReference>
<dbReference type="GO" id="GO:0008278">
    <property type="term" value="C:cohesin complex"/>
    <property type="evidence" value="ECO:0000250"/>
    <property type="project" value="dictyBase"/>
</dbReference>
<dbReference type="GO" id="GO:0030892">
    <property type="term" value="C:mitotic cohesin complex"/>
    <property type="evidence" value="ECO:0000318"/>
    <property type="project" value="GO_Central"/>
</dbReference>
<dbReference type="GO" id="GO:0005634">
    <property type="term" value="C:nucleus"/>
    <property type="evidence" value="ECO:0000250"/>
    <property type="project" value="dictyBase"/>
</dbReference>
<dbReference type="GO" id="GO:0005524">
    <property type="term" value="F:ATP binding"/>
    <property type="evidence" value="ECO:0007669"/>
    <property type="project" value="UniProtKB-KW"/>
</dbReference>
<dbReference type="GO" id="GO:0016887">
    <property type="term" value="F:ATP hydrolysis activity"/>
    <property type="evidence" value="ECO:0007669"/>
    <property type="project" value="InterPro"/>
</dbReference>
<dbReference type="GO" id="GO:0003690">
    <property type="term" value="F:double-stranded DNA binding"/>
    <property type="evidence" value="ECO:0000318"/>
    <property type="project" value="GO_Central"/>
</dbReference>
<dbReference type="GO" id="GO:0046982">
    <property type="term" value="F:protein heterodimerization activity"/>
    <property type="evidence" value="ECO:0000250"/>
    <property type="project" value="dictyBase"/>
</dbReference>
<dbReference type="GO" id="GO:0051301">
    <property type="term" value="P:cell division"/>
    <property type="evidence" value="ECO:0007669"/>
    <property type="project" value="UniProtKB-KW"/>
</dbReference>
<dbReference type="GO" id="GO:0007064">
    <property type="term" value="P:mitotic sister chromatid cohesion"/>
    <property type="evidence" value="ECO:0000250"/>
    <property type="project" value="dictyBase"/>
</dbReference>
<dbReference type="GO" id="GO:0006275">
    <property type="term" value="P:regulation of DNA replication"/>
    <property type="evidence" value="ECO:0000250"/>
    <property type="project" value="UniProtKB"/>
</dbReference>
<dbReference type="FunFam" id="1.20.1060.20:FF:000020">
    <property type="match status" value="1"/>
</dbReference>
<dbReference type="Gene3D" id="1.20.1060.20">
    <property type="match status" value="1"/>
</dbReference>
<dbReference type="Gene3D" id="3.30.70.1620">
    <property type="match status" value="1"/>
</dbReference>
<dbReference type="Gene3D" id="3.40.50.300">
    <property type="entry name" value="P-loop containing nucleotide triphosphate hydrolases"/>
    <property type="match status" value="2"/>
</dbReference>
<dbReference type="InterPro" id="IPR027417">
    <property type="entry name" value="P-loop_NTPase"/>
</dbReference>
<dbReference type="InterPro" id="IPR003395">
    <property type="entry name" value="RecF/RecN/SMC_N"/>
</dbReference>
<dbReference type="InterPro" id="IPR024704">
    <property type="entry name" value="SMC"/>
</dbReference>
<dbReference type="InterPro" id="IPR010935">
    <property type="entry name" value="SMC_hinge"/>
</dbReference>
<dbReference type="InterPro" id="IPR036277">
    <property type="entry name" value="SMC_hinge_sf"/>
</dbReference>
<dbReference type="PANTHER" id="PTHR43977">
    <property type="entry name" value="STRUCTURAL MAINTENANCE OF CHROMOSOMES PROTEIN 3"/>
    <property type="match status" value="1"/>
</dbReference>
<dbReference type="Pfam" id="PF06470">
    <property type="entry name" value="SMC_hinge"/>
    <property type="match status" value="1"/>
</dbReference>
<dbReference type="Pfam" id="PF02463">
    <property type="entry name" value="SMC_N"/>
    <property type="match status" value="2"/>
</dbReference>
<dbReference type="PIRSF" id="PIRSF005719">
    <property type="entry name" value="SMC"/>
    <property type="match status" value="1"/>
</dbReference>
<dbReference type="SMART" id="SM00968">
    <property type="entry name" value="SMC_hinge"/>
    <property type="match status" value="1"/>
</dbReference>
<dbReference type="SUPFAM" id="SSF52540">
    <property type="entry name" value="P-loop containing nucleoside triphosphate hydrolases"/>
    <property type="match status" value="1"/>
</dbReference>
<dbReference type="SUPFAM" id="SSF75553">
    <property type="entry name" value="Smc hinge domain"/>
    <property type="match status" value="1"/>
</dbReference>
<proteinExistence type="inferred from homology"/>
<name>SMC3_DICDI</name>
<accession>Q552D9</accession>
<accession>Q75JI4</accession>
<gene>
    <name type="primary">smc3</name>
    <name type="ORF">DDB_G0276101</name>
</gene>